<sequence>MVSVQINDNESIDKMLKRFKKKYERAGVLKEFRKRAYFVKPSVDSRLKRSRCKRRAQRANEESNS</sequence>
<name>RS21_CHLL2</name>
<feature type="chain" id="PRO_1000120596" description="Small ribosomal subunit protein bS21">
    <location>
        <begin position="1"/>
        <end position="65"/>
    </location>
</feature>
<gene>
    <name evidence="1" type="primary">rpsU</name>
    <name type="ordered locus">Clim_2124</name>
</gene>
<proteinExistence type="inferred from homology"/>
<comment type="similarity">
    <text evidence="1">Belongs to the bacterial ribosomal protein bS21 family.</text>
</comment>
<keyword id="KW-0687">Ribonucleoprotein</keyword>
<keyword id="KW-0689">Ribosomal protein</keyword>
<organism>
    <name type="scientific">Chlorobium limicola (strain DSM 245 / NBRC 103803 / 6330)</name>
    <dbReference type="NCBI Taxonomy" id="290315"/>
    <lineage>
        <taxon>Bacteria</taxon>
        <taxon>Pseudomonadati</taxon>
        <taxon>Chlorobiota</taxon>
        <taxon>Chlorobiia</taxon>
        <taxon>Chlorobiales</taxon>
        <taxon>Chlorobiaceae</taxon>
        <taxon>Chlorobium/Pelodictyon group</taxon>
        <taxon>Chlorobium</taxon>
    </lineage>
</organism>
<reference key="1">
    <citation type="submission" date="2008-05" db="EMBL/GenBank/DDBJ databases">
        <title>Complete sequence of Chlorobium limicola DSM 245.</title>
        <authorList>
            <consortium name="US DOE Joint Genome Institute"/>
            <person name="Lucas S."/>
            <person name="Copeland A."/>
            <person name="Lapidus A."/>
            <person name="Glavina del Rio T."/>
            <person name="Dalin E."/>
            <person name="Tice H."/>
            <person name="Bruce D."/>
            <person name="Goodwin L."/>
            <person name="Pitluck S."/>
            <person name="Schmutz J."/>
            <person name="Larimer F."/>
            <person name="Land M."/>
            <person name="Hauser L."/>
            <person name="Kyrpides N."/>
            <person name="Ovchinnikova G."/>
            <person name="Zhao F."/>
            <person name="Li T."/>
            <person name="Liu Z."/>
            <person name="Overmann J."/>
            <person name="Bryant D.A."/>
            <person name="Richardson P."/>
        </authorList>
    </citation>
    <scope>NUCLEOTIDE SEQUENCE [LARGE SCALE GENOMIC DNA]</scope>
    <source>
        <strain>DSM 245 / NBRC 103803 / 6330</strain>
    </source>
</reference>
<dbReference type="EMBL" id="CP001097">
    <property type="protein sequence ID" value="ACD91148.1"/>
    <property type="molecule type" value="Genomic_DNA"/>
</dbReference>
<dbReference type="RefSeq" id="WP_012467017.1">
    <property type="nucleotide sequence ID" value="NC_010803.1"/>
</dbReference>
<dbReference type="SMR" id="B3EGN5"/>
<dbReference type="STRING" id="290315.Clim_2124"/>
<dbReference type="KEGG" id="cli:Clim_2124"/>
<dbReference type="eggNOG" id="COG0828">
    <property type="taxonomic scope" value="Bacteria"/>
</dbReference>
<dbReference type="HOGENOM" id="CLU_159258_2_1_10"/>
<dbReference type="OrthoDB" id="598353at2"/>
<dbReference type="Proteomes" id="UP000008841">
    <property type="component" value="Chromosome"/>
</dbReference>
<dbReference type="GO" id="GO:1990904">
    <property type="term" value="C:ribonucleoprotein complex"/>
    <property type="evidence" value="ECO:0007669"/>
    <property type="project" value="UniProtKB-KW"/>
</dbReference>
<dbReference type="GO" id="GO:0005840">
    <property type="term" value="C:ribosome"/>
    <property type="evidence" value="ECO:0007669"/>
    <property type="project" value="UniProtKB-KW"/>
</dbReference>
<dbReference type="GO" id="GO:0003735">
    <property type="term" value="F:structural constituent of ribosome"/>
    <property type="evidence" value="ECO:0007669"/>
    <property type="project" value="InterPro"/>
</dbReference>
<dbReference type="GO" id="GO:0006412">
    <property type="term" value="P:translation"/>
    <property type="evidence" value="ECO:0007669"/>
    <property type="project" value="UniProtKB-UniRule"/>
</dbReference>
<dbReference type="Gene3D" id="1.20.5.1150">
    <property type="entry name" value="Ribosomal protein S8"/>
    <property type="match status" value="1"/>
</dbReference>
<dbReference type="HAMAP" id="MF_00358">
    <property type="entry name" value="Ribosomal_bS21"/>
    <property type="match status" value="1"/>
</dbReference>
<dbReference type="InterPro" id="IPR001911">
    <property type="entry name" value="Ribosomal_bS21"/>
</dbReference>
<dbReference type="InterPro" id="IPR038380">
    <property type="entry name" value="Ribosomal_bS21_sf"/>
</dbReference>
<dbReference type="NCBIfam" id="TIGR00030">
    <property type="entry name" value="S21p"/>
    <property type="match status" value="1"/>
</dbReference>
<dbReference type="Pfam" id="PF01165">
    <property type="entry name" value="Ribosomal_S21"/>
    <property type="match status" value="1"/>
</dbReference>
<dbReference type="PRINTS" id="PR00976">
    <property type="entry name" value="RIBOSOMALS21"/>
</dbReference>
<evidence type="ECO:0000255" key="1">
    <source>
        <dbReference type="HAMAP-Rule" id="MF_00358"/>
    </source>
</evidence>
<evidence type="ECO:0000305" key="2"/>
<accession>B3EGN5</accession>
<protein>
    <recommendedName>
        <fullName evidence="1">Small ribosomal subunit protein bS21</fullName>
    </recommendedName>
    <alternativeName>
        <fullName evidence="2">30S ribosomal protein S21</fullName>
    </alternativeName>
</protein>